<keyword id="KW-1185">Reference proteome</keyword>
<reference key="1">
    <citation type="journal article" date="2005" name="Nature">
        <title>The genome of the social amoeba Dictyostelium discoideum.</title>
        <authorList>
            <person name="Eichinger L."/>
            <person name="Pachebat J.A."/>
            <person name="Gloeckner G."/>
            <person name="Rajandream M.A."/>
            <person name="Sucgang R."/>
            <person name="Berriman M."/>
            <person name="Song J."/>
            <person name="Olsen R."/>
            <person name="Szafranski K."/>
            <person name="Xu Q."/>
            <person name="Tunggal B."/>
            <person name="Kummerfeld S."/>
            <person name="Madera M."/>
            <person name="Konfortov B.A."/>
            <person name="Rivero F."/>
            <person name="Bankier A.T."/>
            <person name="Lehmann R."/>
            <person name="Hamlin N."/>
            <person name="Davies R."/>
            <person name="Gaudet P."/>
            <person name="Fey P."/>
            <person name="Pilcher K."/>
            <person name="Chen G."/>
            <person name="Saunders D."/>
            <person name="Sodergren E.J."/>
            <person name="Davis P."/>
            <person name="Kerhornou A."/>
            <person name="Nie X."/>
            <person name="Hall N."/>
            <person name="Anjard C."/>
            <person name="Hemphill L."/>
            <person name="Bason N."/>
            <person name="Farbrother P."/>
            <person name="Desany B."/>
            <person name="Just E."/>
            <person name="Morio T."/>
            <person name="Rost R."/>
            <person name="Churcher C.M."/>
            <person name="Cooper J."/>
            <person name="Haydock S."/>
            <person name="van Driessche N."/>
            <person name="Cronin A."/>
            <person name="Goodhead I."/>
            <person name="Muzny D.M."/>
            <person name="Mourier T."/>
            <person name="Pain A."/>
            <person name="Lu M."/>
            <person name="Harper D."/>
            <person name="Lindsay R."/>
            <person name="Hauser H."/>
            <person name="James K.D."/>
            <person name="Quiles M."/>
            <person name="Madan Babu M."/>
            <person name="Saito T."/>
            <person name="Buchrieser C."/>
            <person name="Wardroper A."/>
            <person name="Felder M."/>
            <person name="Thangavelu M."/>
            <person name="Johnson D."/>
            <person name="Knights A."/>
            <person name="Loulseged H."/>
            <person name="Mungall K.L."/>
            <person name="Oliver K."/>
            <person name="Price C."/>
            <person name="Quail M.A."/>
            <person name="Urushihara H."/>
            <person name="Hernandez J."/>
            <person name="Rabbinowitsch E."/>
            <person name="Steffen D."/>
            <person name="Sanders M."/>
            <person name="Ma J."/>
            <person name="Kohara Y."/>
            <person name="Sharp S."/>
            <person name="Simmonds M.N."/>
            <person name="Spiegler S."/>
            <person name="Tivey A."/>
            <person name="Sugano S."/>
            <person name="White B."/>
            <person name="Walker D."/>
            <person name="Woodward J.R."/>
            <person name="Winckler T."/>
            <person name="Tanaka Y."/>
            <person name="Shaulsky G."/>
            <person name="Schleicher M."/>
            <person name="Weinstock G.M."/>
            <person name="Rosenthal A."/>
            <person name="Cox E.C."/>
            <person name="Chisholm R.L."/>
            <person name="Gibbs R.A."/>
            <person name="Loomis W.F."/>
            <person name="Platzer M."/>
            <person name="Kay R.R."/>
            <person name="Williams J.G."/>
            <person name="Dear P.H."/>
            <person name="Noegel A.A."/>
            <person name="Barrell B.G."/>
            <person name="Kuspa A."/>
        </authorList>
    </citation>
    <scope>NUCLEOTIDE SEQUENCE [LARGE SCALE GENOMIC DNA]</scope>
    <source>
        <strain>AX4</strain>
    </source>
</reference>
<comment type="similarity">
    <text evidence="1">Belongs to the UPF0538 family.</text>
</comment>
<dbReference type="EMBL" id="AAFI02000055">
    <property type="protein sequence ID" value="EAL65746.1"/>
    <property type="molecule type" value="Genomic_DNA"/>
</dbReference>
<dbReference type="RefSeq" id="XP_639075.1">
    <property type="nucleotide sequence ID" value="XM_633983.1"/>
</dbReference>
<dbReference type="PaxDb" id="44689-DDB0238293"/>
<dbReference type="EnsemblProtists" id="EAL65746">
    <property type="protein sequence ID" value="EAL65746"/>
    <property type="gene ID" value="DDB_G0283523"/>
</dbReference>
<dbReference type="GeneID" id="8624100"/>
<dbReference type="KEGG" id="ddi:DDB_G0283523"/>
<dbReference type="dictyBase" id="DDB_G0283523"/>
<dbReference type="VEuPathDB" id="AmoebaDB:DDB_G0283523"/>
<dbReference type="eggNOG" id="KOG4147">
    <property type="taxonomic scope" value="Eukaryota"/>
</dbReference>
<dbReference type="HOGENOM" id="CLU_117792_0_0_1"/>
<dbReference type="InParanoid" id="Q54R16"/>
<dbReference type="OMA" id="HGVVLYM"/>
<dbReference type="PhylomeDB" id="Q54R16"/>
<dbReference type="PRO" id="PR:Q54R16"/>
<dbReference type="Proteomes" id="UP000002195">
    <property type="component" value="Chromosome 4"/>
</dbReference>
<dbReference type="InterPro" id="IPR018794">
    <property type="entry name" value="UPF0538"/>
</dbReference>
<dbReference type="PANTHER" id="PTHR18444">
    <property type="entry name" value="UPF0538 FAMILY MEMBER"/>
    <property type="match status" value="1"/>
</dbReference>
<dbReference type="PANTHER" id="PTHR18444:SF9">
    <property type="entry name" value="UPF0538 PROTEIN C2ORF76"/>
    <property type="match status" value="1"/>
</dbReference>
<dbReference type="Pfam" id="PF10209">
    <property type="entry name" value="DUF2340"/>
    <property type="match status" value="1"/>
</dbReference>
<name>U538_DICDI</name>
<protein>
    <recommendedName>
        <fullName>UPF0538 protein</fullName>
    </recommendedName>
</protein>
<accession>Q54R16</accession>
<organism>
    <name type="scientific">Dictyostelium discoideum</name>
    <name type="common">Social amoeba</name>
    <dbReference type="NCBI Taxonomy" id="44689"/>
    <lineage>
        <taxon>Eukaryota</taxon>
        <taxon>Amoebozoa</taxon>
        <taxon>Evosea</taxon>
        <taxon>Eumycetozoa</taxon>
        <taxon>Dictyostelia</taxon>
        <taxon>Dictyosteliales</taxon>
        <taxon>Dictyosteliaceae</taxon>
        <taxon>Dictyostelium</taxon>
    </lineage>
</organism>
<proteinExistence type="inferred from homology"/>
<gene>
    <name type="ORF">DDB_G0283523</name>
</gene>
<evidence type="ECO:0000305" key="1"/>
<feature type="chain" id="PRO_0000328903" description="UPF0538 protein">
    <location>
        <begin position="1"/>
        <end position="124"/>
    </location>
</feature>
<sequence>MENENKILIIRVIRSFEYRTIKNLILKDIDLNTNVSDFKKLVADKIQTTPGFTPFKTKQYDSMKIFFVPHGQKPNNLTINIENDHFFLNNNKSLAENGVVYETEISFFVMEDYLKYKENPENKW</sequence>